<accession>Q35532</accession>
<geneLocation type="mitochondrion"/>
<proteinExistence type="inferred from homology"/>
<reference key="1">
    <citation type="journal article" date="1997" name="Mol. Phylogenet. Evol.">
        <title>A multigene assessment of phylogenetic relationships within the dasyurid marsupial subfamily Sminthopsinae.</title>
        <authorList>
            <person name="Krajewski C."/>
            <person name="Blacket M."/>
            <person name="Buckley L."/>
            <person name="Westerman M."/>
        </authorList>
    </citation>
    <scope>NUCLEOTIDE SEQUENCE [GENOMIC DNA]</scope>
</reference>
<reference key="2">
    <citation type="journal article" date="1994" name="J. Mammal. Evol.">
        <title>Phylogenetic structure of the marsupial family Dasyuridae based on cytochrome-b DNA sequences.</title>
        <authorList>
            <person name="Krajewski C."/>
            <person name="Painter J."/>
            <person name="Buckley L."/>
            <person name="Westerman M."/>
        </authorList>
    </citation>
    <scope>NUCLEOTIDE SEQUENCE [GENOMIC DNA] OF 32-251</scope>
</reference>
<comment type="function">
    <text evidence="2">Component of the ubiquinol-cytochrome c reductase complex (complex III or cytochrome b-c1 complex) that is part of the mitochondrial respiratory chain. The b-c1 complex mediates electron transfer from ubiquinol to cytochrome c. Contributes to the generation of a proton gradient across the mitochondrial membrane that is then used for ATP synthesis.</text>
</comment>
<comment type="cofactor">
    <cofactor evidence="2">
        <name>heme b</name>
        <dbReference type="ChEBI" id="CHEBI:60344"/>
    </cofactor>
    <text evidence="2">Binds 2 heme b groups non-covalently.</text>
</comment>
<comment type="subunit">
    <text evidence="2">The cytochrome bc1 complex contains 11 subunits: 3 respiratory subunits (MT-CYB, CYC1 and UQCRFS1), 2 core proteins (UQCRC1 and UQCRC2) and 6 low-molecular weight proteins (UQCRH/QCR6, UQCRB/QCR7, UQCRQ/QCR8, UQCR10/QCR9, UQCR11/QCR10 and a cleavage product of UQCRFS1). This cytochrome bc1 complex then forms a dimer.</text>
</comment>
<comment type="subcellular location">
    <subcellularLocation>
        <location evidence="2">Mitochondrion inner membrane</location>
        <topology evidence="2">Multi-pass membrane protein</topology>
    </subcellularLocation>
</comment>
<comment type="miscellaneous">
    <text evidence="1">Heme 1 (or BL or b562) is low-potential and absorbs at about 562 nm, and heme 2 (or BH or b566) is high-potential and absorbs at about 566 nm.</text>
</comment>
<comment type="similarity">
    <text evidence="3 4">Belongs to the cytochrome b family.</text>
</comment>
<comment type="caution">
    <text evidence="2">The full-length protein contains only eight transmembrane helices, not nine as predicted by bioinformatics tools.</text>
</comment>
<gene>
    <name type="primary">MT-CYB</name>
    <name type="synonym">COB</name>
    <name type="synonym">CYTB</name>
    <name type="synonym">MTCYB</name>
</gene>
<organism>
    <name type="scientific">Planigale maculata</name>
    <name type="common">Pygmy planigale</name>
    <name type="synonym">Antechinus maculatus</name>
    <dbReference type="NCBI Taxonomy" id="9297"/>
    <lineage>
        <taxon>Eukaryota</taxon>
        <taxon>Metazoa</taxon>
        <taxon>Chordata</taxon>
        <taxon>Craniata</taxon>
        <taxon>Vertebrata</taxon>
        <taxon>Euteleostomi</taxon>
        <taxon>Mammalia</taxon>
        <taxon>Metatheria</taxon>
        <taxon>Dasyuromorphia</taxon>
        <taxon>Dasyuridae</taxon>
        <taxon>Planigale</taxon>
    </lineage>
</organism>
<dbReference type="EMBL" id="U07590">
    <property type="protein sequence ID" value="AAB88766.1"/>
    <property type="molecule type" value="Genomic_DNA"/>
</dbReference>
<dbReference type="SMR" id="Q35532"/>
<dbReference type="GO" id="GO:0005743">
    <property type="term" value="C:mitochondrial inner membrane"/>
    <property type="evidence" value="ECO:0007669"/>
    <property type="project" value="UniProtKB-SubCell"/>
</dbReference>
<dbReference type="GO" id="GO:0045275">
    <property type="term" value="C:respiratory chain complex III"/>
    <property type="evidence" value="ECO:0007669"/>
    <property type="project" value="InterPro"/>
</dbReference>
<dbReference type="GO" id="GO:0046872">
    <property type="term" value="F:metal ion binding"/>
    <property type="evidence" value="ECO:0007669"/>
    <property type="project" value="UniProtKB-KW"/>
</dbReference>
<dbReference type="GO" id="GO:0008121">
    <property type="term" value="F:ubiquinol-cytochrome-c reductase activity"/>
    <property type="evidence" value="ECO:0007669"/>
    <property type="project" value="InterPro"/>
</dbReference>
<dbReference type="GO" id="GO:0006122">
    <property type="term" value="P:mitochondrial electron transport, ubiquinol to cytochrome c"/>
    <property type="evidence" value="ECO:0007669"/>
    <property type="project" value="TreeGrafter"/>
</dbReference>
<dbReference type="CDD" id="cd00290">
    <property type="entry name" value="cytochrome_b_C"/>
    <property type="match status" value="1"/>
</dbReference>
<dbReference type="CDD" id="cd00284">
    <property type="entry name" value="Cytochrome_b_N"/>
    <property type="match status" value="1"/>
</dbReference>
<dbReference type="FunFam" id="1.20.810.10:FF:000002">
    <property type="entry name" value="Cytochrome b"/>
    <property type="match status" value="1"/>
</dbReference>
<dbReference type="Gene3D" id="1.20.810.10">
    <property type="entry name" value="Cytochrome Bc1 Complex, Chain C"/>
    <property type="match status" value="1"/>
</dbReference>
<dbReference type="InterPro" id="IPR005798">
    <property type="entry name" value="Cyt_b/b6_C"/>
</dbReference>
<dbReference type="InterPro" id="IPR036150">
    <property type="entry name" value="Cyt_b/b6_C_sf"/>
</dbReference>
<dbReference type="InterPro" id="IPR005797">
    <property type="entry name" value="Cyt_b/b6_N"/>
</dbReference>
<dbReference type="InterPro" id="IPR027387">
    <property type="entry name" value="Cytb/b6-like_sf"/>
</dbReference>
<dbReference type="InterPro" id="IPR030689">
    <property type="entry name" value="Cytochrome_b"/>
</dbReference>
<dbReference type="InterPro" id="IPR048260">
    <property type="entry name" value="Cytochrome_b_C_euk/bac"/>
</dbReference>
<dbReference type="InterPro" id="IPR048259">
    <property type="entry name" value="Cytochrome_b_N_euk/bac"/>
</dbReference>
<dbReference type="InterPro" id="IPR016174">
    <property type="entry name" value="Di-haem_cyt_TM"/>
</dbReference>
<dbReference type="PANTHER" id="PTHR19271">
    <property type="entry name" value="CYTOCHROME B"/>
    <property type="match status" value="1"/>
</dbReference>
<dbReference type="PANTHER" id="PTHR19271:SF16">
    <property type="entry name" value="CYTOCHROME B"/>
    <property type="match status" value="1"/>
</dbReference>
<dbReference type="Pfam" id="PF00032">
    <property type="entry name" value="Cytochrom_B_C"/>
    <property type="match status" value="1"/>
</dbReference>
<dbReference type="Pfam" id="PF00033">
    <property type="entry name" value="Cytochrome_B"/>
    <property type="match status" value="1"/>
</dbReference>
<dbReference type="PIRSF" id="PIRSF038885">
    <property type="entry name" value="COB"/>
    <property type="match status" value="1"/>
</dbReference>
<dbReference type="SUPFAM" id="SSF81648">
    <property type="entry name" value="a domain/subunit of cytochrome bc1 complex (Ubiquinol-cytochrome c reductase)"/>
    <property type="match status" value="1"/>
</dbReference>
<dbReference type="SUPFAM" id="SSF81342">
    <property type="entry name" value="Transmembrane di-heme cytochromes"/>
    <property type="match status" value="1"/>
</dbReference>
<dbReference type="PROSITE" id="PS51003">
    <property type="entry name" value="CYTB_CTER"/>
    <property type="match status" value="1"/>
</dbReference>
<dbReference type="PROSITE" id="PS51002">
    <property type="entry name" value="CYTB_NTER"/>
    <property type="match status" value="1"/>
</dbReference>
<feature type="chain" id="PRO_0000061415" description="Cytochrome b">
    <location>
        <begin position="1"/>
        <end position="381"/>
    </location>
</feature>
<feature type="transmembrane region" description="Helical" evidence="2">
    <location>
        <begin position="33"/>
        <end position="53"/>
    </location>
</feature>
<feature type="transmembrane region" description="Helical" evidence="2">
    <location>
        <begin position="77"/>
        <end position="98"/>
    </location>
</feature>
<feature type="transmembrane region" description="Helical" evidence="2">
    <location>
        <begin position="113"/>
        <end position="133"/>
    </location>
</feature>
<feature type="transmembrane region" description="Helical" evidence="2">
    <location>
        <begin position="178"/>
        <end position="198"/>
    </location>
</feature>
<feature type="transmembrane region" description="Helical" evidence="2">
    <location>
        <begin position="226"/>
        <end position="246"/>
    </location>
</feature>
<feature type="transmembrane region" description="Helical" evidence="2">
    <location>
        <begin position="288"/>
        <end position="308"/>
    </location>
</feature>
<feature type="transmembrane region" description="Helical" evidence="2">
    <location>
        <begin position="320"/>
        <end position="340"/>
    </location>
</feature>
<feature type="transmembrane region" description="Helical" evidence="2">
    <location>
        <begin position="347"/>
        <end position="367"/>
    </location>
</feature>
<feature type="binding site" description="axial binding residue" evidence="2">
    <location>
        <position position="83"/>
    </location>
    <ligand>
        <name>heme b</name>
        <dbReference type="ChEBI" id="CHEBI:60344"/>
        <label>b562</label>
    </ligand>
    <ligandPart>
        <name>Fe</name>
        <dbReference type="ChEBI" id="CHEBI:18248"/>
    </ligandPart>
</feature>
<feature type="binding site" description="axial binding residue" evidence="2">
    <location>
        <position position="97"/>
    </location>
    <ligand>
        <name>heme b</name>
        <dbReference type="ChEBI" id="CHEBI:60344"/>
        <label>b566</label>
    </ligand>
    <ligandPart>
        <name>Fe</name>
        <dbReference type="ChEBI" id="CHEBI:18248"/>
    </ligandPart>
</feature>
<feature type="binding site" description="axial binding residue" evidence="2">
    <location>
        <position position="182"/>
    </location>
    <ligand>
        <name>heme b</name>
        <dbReference type="ChEBI" id="CHEBI:60344"/>
        <label>b562</label>
    </ligand>
    <ligandPart>
        <name>Fe</name>
        <dbReference type="ChEBI" id="CHEBI:18248"/>
    </ligandPart>
</feature>
<feature type="binding site" description="axial binding residue" evidence="2">
    <location>
        <position position="196"/>
    </location>
    <ligand>
        <name>heme b</name>
        <dbReference type="ChEBI" id="CHEBI:60344"/>
        <label>b566</label>
    </ligand>
    <ligandPart>
        <name>Fe</name>
        <dbReference type="ChEBI" id="CHEBI:18248"/>
    </ligandPart>
</feature>
<feature type="binding site" evidence="2">
    <location>
        <position position="201"/>
    </location>
    <ligand>
        <name>a ubiquinone</name>
        <dbReference type="ChEBI" id="CHEBI:16389"/>
    </ligand>
</feature>
<evidence type="ECO:0000250" key="1"/>
<evidence type="ECO:0000250" key="2">
    <source>
        <dbReference type="UniProtKB" id="P00157"/>
    </source>
</evidence>
<evidence type="ECO:0000255" key="3">
    <source>
        <dbReference type="PROSITE-ProRule" id="PRU00967"/>
    </source>
</evidence>
<evidence type="ECO:0000255" key="4">
    <source>
        <dbReference type="PROSITE-ProRule" id="PRU00968"/>
    </source>
</evidence>
<protein>
    <recommendedName>
        <fullName>Cytochrome b</fullName>
    </recommendedName>
    <alternativeName>
        <fullName>Complex III subunit 3</fullName>
    </alternativeName>
    <alternativeName>
        <fullName>Complex III subunit III</fullName>
    </alternativeName>
    <alternativeName>
        <fullName>Cytochrome b-c1 complex subunit 3</fullName>
    </alternativeName>
    <alternativeName>
        <fullName>Ubiquinol-cytochrome-c reductase complex cytochrome b subunit</fullName>
    </alternativeName>
</protein>
<keyword id="KW-0249">Electron transport</keyword>
<keyword id="KW-0349">Heme</keyword>
<keyword id="KW-0408">Iron</keyword>
<keyword id="KW-0472">Membrane</keyword>
<keyword id="KW-0479">Metal-binding</keyword>
<keyword id="KW-0496">Mitochondrion</keyword>
<keyword id="KW-0999">Mitochondrion inner membrane</keyword>
<keyword id="KW-0679">Respiratory chain</keyword>
<keyword id="KW-0812">Transmembrane</keyword>
<keyword id="KW-1133">Transmembrane helix</keyword>
<keyword id="KW-0813">Transport</keyword>
<keyword id="KW-0830">Ubiquinone</keyword>
<sequence length="381" mass="42888">MTNLRKTHPLMKIVNHSFIDLPAPSNISAWWNFGSLLGVCLMIQILTGLFLAMHYTSDTLTAFSSVAHICRDVNYGWLIRNLHANGASMFFMCLFLHVGRGIYYGSYLYKETWNIGVVLLLTVMATAFVGYVLPWGQMSFWGATVITNLLSAIPYIGTTLAEWIWGSFAVDKATLTRFFAFHFILPFIITALVIVHLLFLHETGSNNPSGINPDSDKIPFHPYYTIKDALGLMFLLLTLLMLALFSPDSLGDPDNFSPANPLNTPPHIKPEWYFLFAYAILRSIPNKLGGVLALLASILILLIIPFLHTANQRSMMFRPISQTLFWILTANLITLTWIGGQPVEQPFIIIGQLASISYFMLILVLMPLAGLFENYMLKPKW</sequence>
<name>CYB_PLAMU</name>